<name>ACLB1_ARATH</name>
<accession>Q9C522</accession>
<feature type="chain" id="PRO_0000412221" description="ATP-citrate synthase beta chain protein 1">
    <location>
        <begin position="1"/>
        <end position="608"/>
    </location>
</feature>
<feature type="active site" description="Tele-phosphohistidine intermediate" evidence="1">
    <location>
        <position position="273"/>
    </location>
</feature>
<feature type="binding site" evidence="1">
    <location>
        <begin position="214"/>
        <end position="234"/>
    </location>
    <ligand>
        <name>ATP</name>
        <dbReference type="ChEBI" id="CHEBI:30616"/>
    </ligand>
</feature>
<feature type="binding site" evidence="1">
    <location>
        <position position="231"/>
    </location>
    <ligand>
        <name>Mg(2+)</name>
        <dbReference type="ChEBI" id="CHEBI:18420"/>
    </ligand>
</feature>
<feature type="binding site" evidence="1">
    <location>
        <begin position="265"/>
        <end position="291"/>
    </location>
    <ligand>
        <name>ATP</name>
        <dbReference type="ChEBI" id="CHEBI:30616"/>
    </ligand>
</feature>
<feature type="binding site" evidence="2">
    <location>
        <begin position="292"/>
        <end position="302"/>
    </location>
    <ligand>
        <name>CoA</name>
        <dbReference type="ChEBI" id="CHEBI:57287"/>
    </ligand>
</feature>
<comment type="function">
    <text evidence="1">ATP citrate-lyase is the primary enzyme responsible for the synthesis of cytosolic acetyl-CoA, used for the elongation of fatty acids and biosynthesis of isoprenoids, flavonoids and malonated derivatives. May supply substrate to the cytosolic acetyl-CoA carboxylase, which generates the malonyl-CoA used for the synthesis of a multitude of compounds, including very long chain fatty acids and flavonoids. Required for normal growth and development and elongation of C18 fatty acids to C20 to C24 fatty acids in seeds. In contrast to all known animal ACL enzymes having a homomeric structure, plant ACLs are composed of alpha and beta chains (By similarity).</text>
</comment>
<comment type="catalytic activity">
    <reaction>
        <text>oxaloacetate + acetyl-CoA + ADP + phosphate = citrate + ATP + CoA</text>
        <dbReference type="Rhea" id="RHEA:21160"/>
        <dbReference type="ChEBI" id="CHEBI:16452"/>
        <dbReference type="ChEBI" id="CHEBI:16947"/>
        <dbReference type="ChEBI" id="CHEBI:30616"/>
        <dbReference type="ChEBI" id="CHEBI:43474"/>
        <dbReference type="ChEBI" id="CHEBI:57287"/>
        <dbReference type="ChEBI" id="CHEBI:57288"/>
        <dbReference type="ChEBI" id="CHEBI:456216"/>
        <dbReference type="EC" id="2.3.3.8"/>
    </reaction>
</comment>
<comment type="subunit">
    <text evidence="1">Heterooctamer of 4 alpha and 4 beta chains.</text>
</comment>
<comment type="subcellular location">
    <subcellularLocation>
        <location evidence="1">Cytoplasm</location>
        <location evidence="1">Cytosol</location>
    </subcellularLocation>
</comment>
<comment type="similarity">
    <text evidence="3">Belongs to the succinate/malate CoA ligase alpha subunit family.</text>
</comment>
<gene>
    <name type="primary">ACLB-1</name>
    <name type="ordered locus">At3g06650</name>
    <name type="ORF">F5E6.2</name>
    <name type="ORF">T8E24.7</name>
</gene>
<organism>
    <name type="scientific">Arabidopsis thaliana</name>
    <name type="common">Mouse-ear cress</name>
    <dbReference type="NCBI Taxonomy" id="3702"/>
    <lineage>
        <taxon>Eukaryota</taxon>
        <taxon>Viridiplantae</taxon>
        <taxon>Streptophyta</taxon>
        <taxon>Embryophyta</taxon>
        <taxon>Tracheophyta</taxon>
        <taxon>Spermatophyta</taxon>
        <taxon>Magnoliopsida</taxon>
        <taxon>eudicotyledons</taxon>
        <taxon>Gunneridae</taxon>
        <taxon>Pentapetalae</taxon>
        <taxon>rosids</taxon>
        <taxon>malvids</taxon>
        <taxon>Brassicales</taxon>
        <taxon>Brassicaceae</taxon>
        <taxon>Camelineae</taxon>
        <taxon>Arabidopsis</taxon>
    </lineage>
</organism>
<sequence length="608" mass="65814">MATGQLFSRNTQALFYNYKQLPIQRMLDFDFLCGRETPSVAGIINPGSEGFQKLFFGQEEIAIPVHAAIEAACAAHPTADVFINFASFRSAAASSMAALKQPTIKVVAIIAEGVPESDTKQLIAYARANNKVIIGPATVGGVQAGAFKIGDTAGTIDNIIQCKLYRPGSVGFVSKSGGMSNEMYNTIARVTDGIYEGIAIGGDVFPGSTLSDHILRFNNIPQIKMVVVLGELGGRDEYSLVEAMKQGKVTKPVVAWVSGTCARLFKSEVQFGHAGAKSGGEMESAQAKNQALQDAGATVPTSFEALEVAIKETFDKLVEEGKVSPIKEVTPPQIPEDLSSAIKSGKVRAPTHIISTISDDRGEEPCYAGVPMSSIIEQGYGVGDVISLLWFKRSLPRYCTKFIEICIMLCADHGPCVSGAHNTIVTARAGKDLVSSLVSGLLTIGPRFGGAIDDAARYFKDACDRNLTPYEFVEGMKKKGIRVPGIGHRIKSRDNRDKRVELLQKFARSNFPAVKYMEYAVQVETYTLSKANNLVLNVDGAIGSLFLDLLAGSGMFTKQEIDEIVQIGYLNGLFVLARSIGLIGHTFDQKRLKQPLYRHPWEDVLYTK</sequence>
<protein>
    <recommendedName>
        <fullName>ATP-citrate synthase beta chain protein 1</fullName>
        <shortName>ATP-citrate synthase B-1</shortName>
        <ecNumber>2.3.3.8</ecNumber>
    </recommendedName>
    <alternativeName>
        <fullName>ATP-citrate lyase B-1</fullName>
    </alternativeName>
    <alternativeName>
        <fullName>Citrate cleavage enzyme B-1</fullName>
    </alternativeName>
</protein>
<evidence type="ECO:0000250" key="1"/>
<evidence type="ECO:0000255" key="2"/>
<evidence type="ECO:0000305" key="3"/>
<dbReference type="EC" id="2.3.3.8"/>
<dbReference type="EMBL" id="AC020580">
    <property type="protein sequence ID" value="AAG51326.1"/>
    <property type="molecule type" value="Genomic_DNA"/>
</dbReference>
<dbReference type="EMBL" id="AC036106">
    <property type="protein sequence ID" value="AAG50997.1"/>
    <property type="molecule type" value="Genomic_DNA"/>
</dbReference>
<dbReference type="EMBL" id="CP002686">
    <property type="protein sequence ID" value="AEE74426.1"/>
    <property type="molecule type" value="Genomic_DNA"/>
</dbReference>
<dbReference type="EMBL" id="CP002686">
    <property type="protein sequence ID" value="ANM64284.1"/>
    <property type="molecule type" value="Genomic_DNA"/>
</dbReference>
<dbReference type="EMBL" id="BT002736">
    <property type="protein sequence ID" value="AAO22565.1"/>
    <property type="molecule type" value="mRNA"/>
</dbReference>
<dbReference type="RefSeq" id="NP_001326324.1">
    <property type="nucleotide sequence ID" value="NM_001337675.1"/>
</dbReference>
<dbReference type="RefSeq" id="NP_187317.1">
    <property type="nucleotide sequence ID" value="NM_111541.4"/>
</dbReference>
<dbReference type="SMR" id="Q9C522"/>
<dbReference type="BioGRID" id="5180">
    <property type="interactions" value="4"/>
</dbReference>
<dbReference type="FunCoup" id="Q9C522">
    <property type="interactions" value="3812"/>
</dbReference>
<dbReference type="STRING" id="3702.Q9C522"/>
<dbReference type="iPTMnet" id="Q9C522"/>
<dbReference type="PaxDb" id="3702-AT3G06650.1"/>
<dbReference type="ProteomicsDB" id="244358"/>
<dbReference type="EnsemblPlants" id="AT3G06650.1">
    <property type="protein sequence ID" value="AT3G06650.1"/>
    <property type="gene ID" value="AT3G06650"/>
</dbReference>
<dbReference type="EnsemblPlants" id="AT3G06650.2">
    <property type="protein sequence ID" value="AT3G06650.2"/>
    <property type="gene ID" value="AT3G06650"/>
</dbReference>
<dbReference type="GeneID" id="819845"/>
<dbReference type="Gramene" id="AT3G06650.1">
    <property type="protein sequence ID" value="AT3G06650.1"/>
    <property type="gene ID" value="AT3G06650"/>
</dbReference>
<dbReference type="Gramene" id="AT3G06650.2">
    <property type="protein sequence ID" value="AT3G06650.2"/>
    <property type="gene ID" value="AT3G06650"/>
</dbReference>
<dbReference type="KEGG" id="ath:AT3G06650"/>
<dbReference type="Araport" id="AT3G06650"/>
<dbReference type="TAIR" id="AT3G06650">
    <property type="gene designation" value="ACLB-1"/>
</dbReference>
<dbReference type="eggNOG" id="KOG1254">
    <property type="taxonomic scope" value="Eukaryota"/>
</dbReference>
<dbReference type="HOGENOM" id="CLU_006587_4_2_1"/>
<dbReference type="InParanoid" id="Q9C522"/>
<dbReference type="OMA" id="RFIEICT"/>
<dbReference type="OrthoDB" id="1054671at2759"/>
<dbReference type="PhylomeDB" id="Q9C522"/>
<dbReference type="PRO" id="PR:Q9C522"/>
<dbReference type="Proteomes" id="UP000006548">
    <property type="component" value="Chromosome 3"/>
</dbReference>
<dbReference type="ExpressionAtlas" id="Q9C522">
    <property type="expression patterns" value="baseline and differential"/>
</dbReference>
<dbReference type="GO" id="GO:0140615">
    <property type="term" value="C:ATP-dependent citrate lyase complex"/>
    <property type="evidence" value="ECO:0000250"/>
    <property type="project" value="TAIR"/>
</dbReference>
<dbReference type="GO" id="GO:0005829">
    <property type="term" value="C:cytosol"/>
    <property type="evidence" value="ECO:0007005"/>
    <property type="project" value="TAIR"/>
</dbReference>
<dbReference type="GO" id="GO:0005524">
    <property type="term" value="F:ATP binding"/>
    <property type="evidence" value="ECO:0007669"/>
    <property type="project" value="UniProtKB-KW"/>
</dbReference>
<dbReference type="GO" id="GO:0003878">
    <property type="term" value="F:ATP citrate synthase activity"/>
    <property type="evidence" value="ECO:0000250"/>
    <property type="project" value="TAIR"/>
</dbReference>
<dbReference type="GO" id="GO:0046872">
    <property type="term" value="F:metal ion binding"/>
    <property type="evidence" value="ECO:0007669"/>
    <property type="project" value="UniProtKB-KW"/>
</dbReference>
<dbReference type="GO" id="GO:0006085">
    <property type="term" value="P:acetyl-CoA biosynthetic process"/>
    <property type="evidence" value="ECO:0000304"/>
    <property type="project" value="TAIR"/>
</dbReference>
<dbReference type="GO" id="GO:0006629">
    <property type="term" value="P:lipid metabolic process"/>
    <property type="evidence" value="ECO:0007669"/>
    <property type="project" value="UniProtKB-KW"/>
</dbReference>
<dbReference type="CDD" id="cd06100">
    <property type="entry name" value="CCL_ACL-C"/>
    <property type="match status" value="1"/>
</dbReference>
<dbReference type="FunFam" id="3.40.50.720:FF:000136">
    <property type="entry name" value="ATP-citrate synthase beta chain protein"/>
    <property type="match status" value="1"/>
</dbReference>
<dbReference type="FunFam" id="3.40.50.261:FF:000003">
    <property type="entry name" value="ATP-citrate synthase subunit"/>
    <property type="match status" value="1"/>
</dbReference>
<dbReference type="FunFam" id="1.10.230.10:FF:000005">
    <property type="entry name" value="ATP-citrate synthase subunit 1"/>
    <property type="match status" value="1"/>
</dbReference>
<dbReference type="Gene3D" id="1.10.580.10">
    <property type="entry name" value="Citrate Synthase, domain 1"/>
    <property type="match status" value="1"/>
</dbReference>
<dbReference type="Gene3D" id="1.10.230.10">
    <property type="entry name" value="Cytochrome P450-Terp, domain 2"/>
    <property type="match status" value="1"/>
</dbReference>
<dbReference type="Gene3D" id="3.40.50.720">
    <property type="entry name" value="NAD(P)-binding Rossmann-like Domain"/>
    <property type="match status" value="1"/>
</dbReference>
<dbReference type="Gene3D" id="3.40.50.261">
    <property type="entry name" value="Succinyl-CoA synthetase domains"/>
    <property type="match status" value="1"/>
</dbReference>
<dbReference type="InterPro" id="IPR017440">
    <property type="entry name" value="Cit_synth/succinyl-CoA_lig_AS"/>
</dbReference>
<dbReference type="InterPro" id="IPR016142">
    <property type="entry name" value="Citrate_synth-like_lrg_a-sub"/>
</dbReference>
<dbReference type="InterPro" id="IPR016143">
    <property type="entry name" value="Citrate_synth-like_sm_a-sub"/>
</dbReference>
<dbReference type="InterPro" id="IPR002020">
    <property type="entry name" value="Citrate_synthase"/>
</dbReference>
<dbReference type="InterPro" id="IPR036969">
    <property type="entry name" value="Citrate_synthase_sf"/>
</dbReference>
<dbReference type="InterPro" id="IPR033847">
    <property type="entry name" value="Citrt_syn/SCS-alpha_CS"/>
</dbReference>
<dbReference type="InterPro" id="IPR036291">
    <property type="entry name" value="NAD(P)-bd_dom_sf"/>
</dbReference>
<dbReference type="InterPro" id="IPR017866">
    <property type="entry name" value="Succ-CoA_synthase_bsu_CS"/>
</dbReference>
<dbReference type="InterPro" id="IPR005811">
    <property type="entry name" value="SUCC_ACL_C"/>
</dbReference>
<dbReference type="InterPro" id="IPR016102">
    <property type="entry name" value="Succinyl-CoA_synth-like"/>
</dbReference>
<dbReference type="PANTHER" id="PTHR23118">
    <property type="entry name" value="ATP-CITRATE SYNTHASE"/>
    <property type="match status" value="1"/>
</dbReference>
<dbReference type="PANTHER" id="PTHR23118:SF42">
    <property type="entry name" value="ATP-CITRATE SYNTHASE"/>
    <property type="match status" value="1"/>
</dbReference>
<dbReference type="Pfam" id="PF00285">
    <property type="entry name" value="Citrate_synt"/>
    <property type="match status" value="1"/>
</dbReference>
<dbReference type="Pfam" id="PF00549">
    <property type="entry name" value="Ligase_CoA"/>
    <property type="match status" value="1"/>
</dbReference>
<dbReference type="PRINTS" id="PR01798">
    <property type="entry name" value="SCOASYNTHASE"/>
</dbReference>
<dbReference type="SUPFAM" id="SSF48256">
    <property type="entry name" value="Citrate synthase"/>
    <property type="match status" value="1"/>
</dbReference>
<dbReference type="SUPFAM" id="SSF51735">
    <property type="entry name" value="NAD(P)-binding Rossmann-fold domains"/>
    <property type="match status" value="1"/>
</dbReference>
<dbReference type="PROSITE" id="PS01216">
    <property type="entry name" value="SUCCINYL_COA_LIG_1"/>
    <property type="match status" value="1"/>
</dbReference>
<dbReference type="PROSITE" id="PS00399">
    <property type="entry name" value="SUCCINYL_COA_LIG_2"/>
    <property type="match status" value="1"/>
</dbReference>
<dbReference type="PROSITE" id="PS01217">
    <property type="entry name" value="SUCCINYL_COA_LIG_3"/>
    <property type="match status" value="1"/>
</dbReference>
<keyword id="KW-0012">Acyltransferase</keyword>
<keyword id="KW-0067">ATP-binding</keyword>
<keyword id="KW-0963">Cytoplasm</keyword>
<keyword id="KW-0444">Lipid biosynthesis</keyword>
<keyword id="KW-0443">Lipid metabolism</keyword>
<keyword id="KW-0460">Magnesium</keyword>
<keyword id="KW-0479">Metal-binding</keyword>
<keyword id="KW-0547">Nucleotide-binding</keyword>
<keyword id="KW-1185">Reference proteome</keyword>
<keyword id="KW-0808">Transferase</keyword>
<proteinExistence type="evidence at transcript level"/>
<reference key="1">
    <citation type="journal article" date="2000" name="Nature">
        <title>Sequence and analysis of chromosome 3 of the plant Arabidopsis thaliana.</title>
        <authorList>
            <person name="Salanoubat M."/>
            <person name="Lemcke K."/>
            <person name="Rieger M."/>
            <person name="Ansorge W."/>
            <person name="Unseld M."/>
            <person name="Fartmann B."/>
            <person name="Valle G."/>
            <person name="Bloecker H."/>
            <person name="Perez-Alonso M."/>
            <person name="Obermaier B."/>
            <person name="Delseny M."/>
            <person name="Boutry M."/>
            <person name="Grivell L.A."/>
            <person name="Mache R."/>
            <person name="Puigdomenech P."/>
            <person name="De Simone V."/>
            <person name="Choisne N."/>
            <person name="Artiguenave F."/>
            <person name="Robert C."/>
            <person name="Brottier P."/>
            <person name="Wincker P."/>
            <person name="Cattolico L."/>
            <person name="Weissenbach J."/>
            <person name="Saurin W."/>
            <person name="Quetier F."/>
            <person name="Schaefer M."/>
            <person name="Mueller-Auer S."/>
            <person name="Gabel C."/>
            <person name="Fuchs M."/>
            <person name="Benes V."/>
            <person name="Wurmbach E."/>
            <person name="Drzonek H."/>
            <person name="Erfle H."/>
            <person name="Jordan N."/>
            <person name="Bangert S."/>
            <person name="Wiedelmann R."/>
            <person name="Kranz H."/>
            <person name="Voss H."/>
            <person name="Holland R."/>
            <person name="Brandt P."/>
            <person name="Nyakatura G."/>
            <person name="Vezzi A."/>
            <person name="D'Angelo M."/>
            <person name="Pallavicini A."/>
            <person name="Toppo S."/>
            <person name="Simionati B."/>
            <person name="Conrad A."/>
            <person name="Hornischer K."/>
            <person name="Kauer G."/>
            <person name="Loehnert T.-H."/>
            <person name="Nordsiek G."/>
            <person name="Reichelt J."/>
            <person name="Scharfe M."/>
            <person name="Schoen O."/>
            <person name="Bargues M."/>
            <person name="Terol J."/>
            <person name="Climent J."/>
            <person name="Navarro P."/>
            <person name="Collado C."/>
            <person name="Perez-Perez A."/>
            <person name="Ottenwaelder B."/>
            <person name="Duchemin D."/>
            <person name="Cooke R."/>
            <person name="Laudie M."/>
            <person name="Berger-Llauro C."/>
            <person name="Purnelle B."/>
            <person name="Masuy D."/>
            <person name="de Haan M."/>
            <person name="Maarse A.C."/>
            <person name="Alcaraz J.-P."/>
            <person name="Cottet A."/>
            <person name="Casacuberta E."/>
            <person name="Monfort A."/>
            <person name="Argiriou A."/>
            <person name="Flores M."/>
            <person name="Liguori R."/>
            <person name="Vitale D."/>
            <person name="Mannhaupt G."/>
            <person name="Haase D."/>
            <person name="Schoof H."/>
            <person name="Rudd S."/>
            <person name="Zaccaria P."/>
            <person name="Mewes H.-W."/>
            <person name="Mayer K.F.X."/>
            <person name="Kaul S."/>
            <person name="Town C.D."/>
            <person name="Koo H.L."/>
            <person name="Tallon L.J."/>
            <person name="Jenkins J."/>
            <person name="Rooney T."/>
            <person name="Rizzo M."/>
            <person name="Walts A."/>
            <person name="Utterback T."/>
            <person name="Fujii C.Y."/>
            <person name="Shea T.P."/>
            <person name="Creasy T.H."/>
            <person name="Haas B."/>
            <person name="Maiti R."/>
            <person name="Wu D."/>
            <person name="Peterson J."/>
            <person name="Van Aken S."/>
            <person name="Pai G."/>
            <person name="Militscher J."/>
            <person name="Sellers P."/>
            <person name="Gill J.E."/>
            <person name="Feldblyum T.V."/>
            <person name="Preuss D."/>
            <person name="Lin X."/>
            <person name="Nierman W.C."/>
            <person name="Salzberg S.L."/>
            <person name="White O."/>
            <person name="Venter J.C."/>
            <person name="Fraser C.M."/>
            <person name="Kaneko T."/>
            <person name="Nakamura Y."/>
            <person name="Sato S."/>
            <person name="Kato T."/>
            <person name="Asamizu E."/>
            <person name="Sasamoto S."/>
            <person name="Kimura T."/>
            <person name="Idesawa K."/>
            <person name="Kawashima K."/>
            <person name="Kishida Y."/>
            <person name="Kiyokawa C."/>
            <person name="Kohara M."/>
            <person name="Matsumoto M."/>
            <person name="Matsuno A."/>
            <person name="Muraki A."/>
            <person name="Nakayama S."/>
            <person name="Nakazaki N."/>
            <person name="Shinpo S."/>
            <person name="Takeuchi C."/>
            <person name="Wada T."/>
            <person name="Watanabe A."/>
            <person name="Yamada M."/>
            <person name="Yasuda M."/>
            <person name="Tabata S."/>
        </authorList>
    </citation>
    <scope>NUCLEOTIDE SEQUENCE [LARGE SCALE GENOMIC DNA]</scope>
    <source>
        <strain>cv. Columbia</strain>
    </source>
</reference>
<reference key="2">
    <citation type="journal article" date="2017" name="Plant J.">
        <title>Araport11: a complete reannotation of the Arabidopsis thaliana reference genome.</title>
        <authorList>
            <person name="Cheng C.Y."/>
            <person name="Krishnakumar V."/>
            <person name="Chan A.P."/>
            <person name="Thibaud-Nissen F."/>
            <person name="Schobel S."/>
            <person name="Town C.D."/>
        </authorList>
    </citation>
    <scope>GENOME REANNOTATION</scope>
    <source>
        <strain>cv. Columbia</strain>
    </source>
</reference>
<reference key="3">
    <citation type="journal article" date="2003" name="Science">
        <title>Empirical analysis of transcriptional activity in the Arabidopsis genome.</title>
        <authorList>
            <person name="Yamada K."/>
            <person name="Lim J."/>
            <person name="Dale J.M."/>
            <person name="Chen H."/>
            <person name="Shinn P."/>
            <person name="Palm C.J."/>
            <person name="Southwick A.M."/>
            <person name="Wu H.C."/>
            <person name="Kim C.J."/>
            <person name="Nguyen M."/>
            <person name="Pham P.K."/>
            <person name="Cheuk R.F."/>
            <person name="Karlin-Newmann G."/>
            <person name="Liu S.X."/>
            <person name="Lam B."/>
            <person name="Sakano H."/>
            <person name="Wu T."/>
            <person name="Yu G."/>
            <person name="Miranda M."/>
            <person name="Quach H.L."/>
            <person name="Tripp M."/>
            <person name="Chang C.H."/>
            <person name="Lee J.M."/>
            <person name="Toriumi M.J."/>
            <person name="Chan M.M."/>
            <person name="Tang C.C."/>
            <person name="Onodera C.S."/>
            <person name="Deng J.M."/>
            <person name="Akiyama K."/>
            <person name="Ansari Y."/>
            <person name="Arakawa T."/>
            <person name="Banh J."/>
            <person name="Banno F."/>
            <person name="Bowser L."/>
            <person name="Brooks S.Y."/>
            <person name="Carninci P."/>
            <person name="Chao Q."/>
            <person name="Choy N."/>
            <person name="Enju A."/>
            <person name="Goldsmith A.D."/>
            <person name="Gurjal M."/>
            <person name="Hansen N.F."/>
            <person name="Hayashizaki Y."/>
            <person name="Johnson-Hopson C."/>
            <person name="Hsuan V.W."/>
            <person name="Iida K."/>
            <person name="Karnes M."/>
            <person name="Khan S."/>
            <person name="Koesema E."/>
            <person name="Ishida J."/>
            <person name="Jiang P.X."/>
            <person name="Jones T."/>
            <person name="Kawai J."/>
            <person name="Kamiya A."/>
            <person name="Meyers C."/>
            <person name="Nakajima M."/>
            <person name="Narusaka M."/>
            <person name="Seki M."/>
            <person name="Sakurai T."/>
            <person name="Satou M."/>
            <person name="Tamse R."/>
            <person name="Vaysberg M."/>
            <person name="Wallender E.K."/>
            <person name="Wong C."/>
            <person name="Yamamura Y."/>
            <person name="Yuan S."/>
            <person name="Shinozaki K."/>
            <person name="Davis R.W."/>
            <person name="Theologis A."/>
            <person name="Ecker J.R."/>
        </authorList>
    </citation>
    <scope>NUCLEOTIDE SEQUENCE [LARGE SCALE MRNA]</scope>
    <source>
        <strain>cv. Columbia</strain>
    </source>
</reference>